<sequence>MSIKTVKDFNSFAGKRVLVRCDFNVPLKEGSISDDTRIKAALPTIEYLKERGARIVLVSHLGRPEGKKNLKYSLKPVANRLSGLLNQDVKMFSDCIGSEIVNNTLQMKDGDVVLLENVRFYAEEEKNDKNFAKKLSENGDVFVSDAFGAAHRAHASTVGVSDYLPSVGGFLMEKEDKFLGEVLKNPEKPFVSIIGGSKVSSKIAVLESLLSKSNVVVIGGGMAYTFLYSKGYSIGKSLLESEYIDTASSFLRKAKELGVKVILPLDHIVADDFNKNSTPEYIDSLNIPENKIGMDIGVNTLKEIEKVVKTAKTIIWNGPLGVFEFDSFSKGTAKVAEMVASCSGLTVVGGGDSVAAVNKFNLSDKITHVSTGGGASLEYLEGKILPGIKVLEK</sequence>
<name>PGK_BORAP</name>
<proteinExistence type="inferred from homology"/>
<evidence type="ECO:0000255" key="1">
    <source>
        <dbReference type="HAMAP-Rule" id="MF_00145"/>
    </source>
</evidence>
<dbReference type="EC" id="2.7.2.3" evidence="1"/>
<dbReference type="EMBL" id="CP000395">
    <property type="protein sequence ID" value="ABH01319.1"/>
    <property type="molecule type" value="Genomic_DNA"/>
</dbReference>
<dbReference type="EMBL" id="CP002933">
    <property type="protein sequence ID" value="AEL69288.1"/>
    <property type="molecule type" value="Genomic_DNA"/>
</dbReference>
<dbReference type="RefSeq" id="WP_011600803.1">
    <property type="nucleotide sequence ID" value="NC_008277.1"/>
</dbReference>
<dbReference type="SMR" id="Q0SPA9"/>
<dbReference type="STRING" id="29518.BLA32_04005"/>
<dbReference type="KEGG" id="baf:BAPKO_0056"/>
<dbReference type="KEGG" id="bafz:BafPKo_0055"/>
<dbReference type="PATRIC" id="fig|390236.22.peg.54"/>
<dbReference type="eggNOG" id="COG0126">
    <property type="taxonomic scope" value="Bacteria"/>
</dbReference>
<dbReference type="HOGENOM" id="CLU_025427_0_2_12"/>
<dbReference type="OrthoDB" id="9808460at2"/>
<dbReference type="UniPathway" id="UPA00109">
    <property type="reaction ID" value="UER00185"/>
</dbReference>
<dbReference type="Proteomes" id="UP000005216">
    <property type="component" value="Chromosome"/>
</dbReference>
<dbReference type="GO" id="GO:0005829">
    <property type="term" value="C:cytosol"/>
    <property type="evidence" value="ECO:0007669"/>
    <property type="project" value="TreeGrafter"/>
</dbReference>
<dbReference type="GO" id="GO:0043531">
    <property type="term" value="F:ADP binding"/>
    <property type="evidence" value="ECO:0007669"/>
    <property type="project" value="TreeGrafter"/>
</dbReference>
<dbReference type="GO" id="GO:0005524">
    <property type="term" value="F:ATP binding"/>
    <property type="evidence" value="ECO:0007669"/>
    <property type="project" value="UniProtKB-KW"/>
</dbReference>
<dbReference type="GO" id="GO:0004618">
    <property type="term" value="F:phosphoglycerate kinase activity"/>
    <property type="evidence" value="ECO:0007669"/>
    <property type="project" value="UniProtKB-UniRule"/>
</dbReference>
<dbReference type="GO" id="GO:0006094">
    <property type="term" value="P:gluconeogenesis"/>
    <property type="evidence" value="ECO:0007669"/>
    <property type="project" value="TreeGrafter"/>
</dbReference>
<dbReference type="GO" id="GO:0006096">
    <property type="term" value="P:glycolytic process"/>
    <property type="evidence" value="ECO:0007669"/>
    <property type="project" value="UniProtKB-UniRule"/>
</dbReference>
<dbReference type="CDD" id="cd00318">
    <property type="entry name" value="Phosphoglycerate_kinase"/>
    <property type="match status" value="1"/>
</dbReference>
<dbReference type="FunFam" id="3.40.50.1260:FF:000003">
    <property type="entry name" value="Phosphoglycerate kinase"/>
    <property type="match status" value="1"/>
</dbReference>
<dbReference type="FunFam" id="3.40.50.1260:FF:000006">
    <property type="entry name" value="Phosphoglycerate kinase"/>
    <property type="match status" value="1"/>
</dbReference>
<dbReference type="Gene3D" id="3.40.50.1260">
    <property type="entry name" value="Phosphoglycerate kinase, N-terminal domain"/>
    <property type="match status" value="2"/>
</dbReference>
<dbReference type="HAMAP" id="MF_00145">
    <property type="entry name" value="Phosphoglyc_kinase"/>
    <property type="match status" value="1"/>
</dbReference>
<dbReference type="InterPro" id="IPR001576">
    <property type="entry name" value="Phosphoglycerate_kinase"/>
</dbReference>
<dbReference type="InterPro" id="IPR015911">
    <property type="entry name" value="Phosphoglycerate_kinase_CS"/>
</dbReference>
<dbReference type="InterPro" id="IPR015824">
    <property type="entry name" value="Phosphoglycerate_kinase_N"/>
</dbReference>
<dbReference type="InterPro" id="IPR036043">
    <property type="entry name" value="Phosphoglycerate_kinase_sf"/>
</dbReference>
<dbReference type="PANTHER" id="PTHR11406">
    <property type="entry name" value="PHOSPHOGLYCERATE KINASE"/>
    <property type="match status" value="1"/>
</dbReference>
<dbReference type="PANTHER" id="PTHR11406:SF23">
    <property type="entry name" value="PHOSPHOGLYCERATE KINASE 1, CHLOROPLASTIC-RELATED"/>
    <property type="match status" value="1"/>
</dbReference>
<dbReference type="Pfam" id="PF00162">
    <property type="entry name" value="PGK"/>
    <property type="match status" value="1"/>
</dbReference>
<dbReference type="PIRSF" id="PIRSF000724">
    <property type="entry name" value="Pgk"/>
    <property type="match status" value="1"/>
</dbReference>
<dbReference type="PRINTS" id="PR00477">
    <property type="entry name" value="PHGLYCKINASE"/>
</dbReference>
<dbReference type="SUPFAM" id="SSF53748">
    <property type="entry name" value="Phosphoglycerate kinase"/>
    <property type="match status" value="1"/>
</dbReference>
<dbReference type="PROSITE" id="PS00111">
    <property type="entry name" value="PGLYCERATE_KINASE"/>
    <property type="match status" value="1"/>
</dbReference>
<keyword id="KW-0067">ATP-binding</keyword>
<keyword id="KW-0963">Cytoplasm</keyword>
<keyword id="KW-0324">Glycolysis</keyword>
<keyword id="KW-0418">Kinase</keyword>
<keyword id="KW-0547">Nucleotide-binding</keyword>
<keyword id="KW-0808">Transferase</keyword>
<reference key="1">
    <citation type="journal article" date="2006" name="BMC Genomics">
        <title>Comparative genome analysis: selection pressure on the Borrelia vls cassettes is essential for infectivity.</title>
        <authorList>
            <person name="Gloeckner G."/>
            <person name="Schulte-Spechtel U."/>
            <person name="Schilhabel M."/>
            <person name="Felder M."/>
            <person name="Suehnel J."/>
            <person name="Wilske B."/>
            <person name="Platzer M."/>
        </authorList>
    </citation>
    <scope>NUCLEOTIDE SEQUENCE [LARGE SCALE GENOMIC DNA]</scope>
    <source>
        <strain>PKo</strain>
    </source>
</reference>
<reference key="2">
    <citation type="journal article" date="2011" name="J. Bacteriol.">
        <title>Whole-genome sequences of two Borrelia afzelii and two Borrelia garinii Lyme disease agent isolates.</title>
        <authorList>
            <person name="Casjens S.R."/>
            <person name="Mongodin E.F."/>
            <person name="Qiu W.G."/>
            <person name="Dunn J.J."/>
            <person name="Luft B.J."/>
            <person name="Fraser-Liggett C.M."/>
            <person name="Schutzer S.E."/>
        </authorList>
    </citation>
    <scope>NUCLEOTIDE SEQUENCE [LARGE SCALE GENOMIC DNA]</scope>
    <source>
        <strain>PKo</strain>
    </source>
</reference>
<feature type="chain" id="PRO_1000192803" description="Phosphoglycerate kinase">
    <location>
        <begin position="1"/>
        <end position="393"/>
    </location>
</feature>
<feature type="binding site" evidence="1">
    <location>
        <begin position="22"/>
        <end position="24"/>
    </location>
    <ligand>
        <name>substrate</name>
    </ligand>
</feature>
<feature type="binding site" evidence="1">
    <location>
        <position position="37"/>
    </location>
    <ligand>
        <name>substrate</name>
    </ligand>
</feature>
<feature type="binding site" evidence="1">
    <location>
        <begin position="60"/>
        <end position="63"/>
    </location>
    <ligand>
        <name>substrate</name>
    </ligand>
</feature>
<feature type="binding site" evidence="1">
    <location>
        <position position="119"/>
    </location>
    <ligand>
        <name>substrate</name>
    </ligand>
</feature>
<feature type="binding site" evidence="1">
    <location>
        <position position="152"/>
    </location>
    <ligand>
        <name>substrate</name>
    </ligand>
</feature>
<feature type="binding site" evidence="1">
    <location>
        <position position="202"/>
    </location>
    <ligand>
        <name>ATP</name>
        <dbReference type="ChEBI" id="CHEBI:30616"/>
    </ligand>
</feature>
<feature type="binding site" evidence="1">
    <location>
        <position position="293"/>
    </location>
    <ligand>
        <name>ATP</name>
        <dbReference type="ChEBI" id="CHEBI:30616"/>
    </ligand>
</feature>
<feature type="binding site" evidence="1">
    <location>
        <position position="324"/>
    </location>
    <ligand>
        <name>ATP</name>
        <dbReference type="ChEBI" id="CHEBI:30616"/>
    </ligand>
</feature>
<feature type="binding site" evidence="1">
    <location>
        <begin position="350"/>
        <end position="353"/>
    </location>
    <ligand>
        <name>ATP</name>
        <dbReference type="ChEBI" id="CHEBI:30616"/>
    </ligand>
</feature>
<protein>
    <recommendedName>
        <fullName evidence="1">Phosphoglycerate kinase</fullName>
        <ecNumber evidence="1">2.7.2.3</ecNumber>
    </recommendedName>
</protein>
<gene>
    <name evidence="1" type="primary">pgk</name>
    <name type="ordered locus">BAPKO_0056</name>
    <name type="ordered locus">BafPKo_0055</name>
</gene>
<comment type="catalytic activity">
    <reaction evidence="1">
        <text>(2R)-3-phosphoglycerate + ATP = (2R)-3-phospho-glyceroyl phosphate + ADP</text>
        <dbReference type="Rhea" id="RHEA:14801"/>
        <dbReference type="ChEBI" id="CHEBI:30616"/>
        <dbReference type="ChEBI" id="CHEBI:57604"/>
        <dbReference type="ChEBI" id="CHEBI:58272"/>
        <dbReference type="ChEBI" id="CHEBI:456216"/>
        <dbReference type="EC" id="2.7.2.3"/>
    </reaction>
</comment>
<comment type="pathway">
    <text evidence="1">Carbohydrate degradation; glycolysis; pyruvate from D-glyceraldehyde 3-phosphate: step 2/5.</text>
</comment>
<comment type="subunit">
    <text evidence="1">Monomer.</text>
</comment>
<comment type="subcellular location">
    <subcellularLocation>
        <location evidence="1">Cytoplasm</location>
    </subcellularLocation>
</comment>
<comment type="similarity">
    <text evidence="1">Belongs to the phosphoglycerate kinase family.</text>
</comment>
<organism>
    <name type="scientific">Borreliella afzelii (strain PKo)</name>
    <name type="common">Borrelia afzelii</name>
    <dbReference type="NCBI Taxonomy" id="390236"/>
    <lineage>
        <taxon>Bacteria</taxon>
        <taxon>Pseudomonadati</taxon>
        <taxon>Spirochaetota</taxon>
        <taxon>Spirochaetia</taxon>
        <taxon>Spirochaetales</taxon>
        <taxon>Borreliaceae</taxon>
        <taxon>Borreliella</taxon>
    </lineage>
</organism>
<accession>Q0SPA9</accession>
<accession>G0IQQ2</accession>